<organism>
    <name type="scientific">Bacteroides fragilis (strain YCH46)</name>
    <dbReference type="NCBI Taxonomy" id="295405"/>
    <lineage>
        <taxon>Bacteria</taxon>
        <taxon>Pseudomonadati</taxon>
        <taxon>Bacteroidota</taxon>
        <taxon>Bacteroidia</taxon>
        <taxon>Bacteroidales</taxon>
        <taxon>Bacteroidaceae</taxon>
        <taxon>Bacteroides</taxon>
    </lineage>
</organism>
<gene>
    <name evidence="1" type="primary">argB</name>
    <name type="ordered locus">BF0240</name>
</gene>
<comment type="function">
    <text evidence="1">Catalyzes the ATP-dependent phosphorylation of N-acetyl-L-glutamate.</text>
</comment>
<comment type="catalytic activity">
    <reaction evidence="1">
        <text>N-acetyl-L-glutamate + ATP = N-acetyl-L-glutamyl 5-phosphate + ADP</text>
        <dbReference type="Rhea" id="RHEA:14629"/>
        <dbReference type="ChEBI" id="CHEBI:30616"/>
        <dbReference type="ChEBI" id="CHEBI:44337"/>
        <dbReference type="ChEBI" id="CHEBI:57936"/>
        <dbReference type="ChEBI" id="CHEBI:456216"/>
        <dbReference type="EC" id="2.7.2.8"/>
    </reaction>
</comment>
<comment type="pathway">
    <text evidence="1">Amino-acid biosynthesis; L-arginine biosynthesis; N(2)-acetyl-L-ornithine from L-glutamate: step 2/4.</text>
</comment>
<comment type="subcellular location">
    <subcellularLocation>
        <location evidence="1">Cytoplasm</location>
    </subcellularLocation>
</comment>
<comment type="similarity">
    <text evidence="1">Belongs to the acetylglutamate kinase family. ArgB subfamily.</text>
</comment>
<name>ARGB_BACFR</name>
<feature type="chain" id="PRO_0000112581" description="Acetylglutamate kinase">
    <location>
        <begin position="1"/>
        <end position="261"/>
    </location>
</feature>
<feature type="binding site" evidence="1">
    <location>
        <begin position="45"/>
        <end position="46"/>
    </location>
    <ligand>
        <name>substrate</name>
    </ligand>
</feature>
<feature type="binding site" evidence="1">
    <location>
        <position position="67"/>
    </location>
    <ligand>
        <name>substrate</name>
    </ligand>
</feature>
<feature type="binding site" evidence="1">
    <location>
        <position position="162"/>
    </location>
    <ligand>
        <name>substrate</name>
    </ligand>
</feature>
<feature type="site" description="Transition state stabilizer" evidence="1">
    <location>
        <position position="13"/>
    </location>
</feature>
<feature type="site" description="Transition state stabilizer" evidence="1">
    <location>
        <position position="228"/>
    </location>
</feature>
<accession>Q64ZT7</accession>
<reference key="1">
    <citation type="journal article" date="2004" name="Proc. Natl. Acad. Sci. U.S.A.">
        <title>Genomic analysis of Bacteroides fragilis reveals extensive DNA inversions regulating cell surface adaptation.</title>
        <authorList>
            <person name="Kuwahara T."/>
            <person name="Yamashita A."/>
            <person name="Hirakawa H."/>
            <person name="Nakayama H."/>
            <person name="Toh H."/>
            <person name="Okada N."/>
            <person name="Kuhara S."/>
            <person name="Hattori M."/>
            <person name="Hayashi T."/>
            <person name="Ohnishi Y."/>
        </authorList>
    </citation>
    <scope>NUCLEOTIDE SEQUENCE [LARGE SCALE GENOMIC DNA]</scope>
    <source>
        <strain>YCH46</strain>
    </source>
</reference>
<proteinExistence type="inferred from homology"/>
<protein>
    <recommendedName>
        <fullName evidence="1">Acetylglutamate kinase</fullName>
        <ecNumber evidence="1">2.7.2.8</ecNumber>
    </recommendedName>
    <alternativeName>
        <fullName evidence="1">N-acetyl-L-glutamate 5-phosphotransferase</fullName>
    </alternativeName>
    <alternativeName>
        <fullName evidence="1">NAG kinase</fullName>
        <shortName evidence="1">NAGK</shortName>
    </alternativeName>
</protein>
<sequence length="261" mass="27994">MKEKMKEKLTVIKVGGKIVEEEATLNQLLNDFAAIEGHKVLVHGGGRSATKIAAQLGIDSKMVNGRRITDAETLKVVTMVYGGLVNKNIVAGLQARGVNALGLTGADMNVIRSMKRPVKEVDYGFVGDVERVDSTLLSDLIHKGVVPVMAPLTHDGQGNMLNTNADTIAGETAKALSAIFDVTLVYCFEKKGVLRDENDDESVIPQINHAEFQRYIAEGVIQGGMIPKLENSFEAINAGVSEVVITLASAIHTDGGTRIKK</sequence>
<dbReference type="EC" id="2.7.2.8" evidence="1"/>
<dbReference type="EMBL" id="AP006841">
    <property type="protein sequence ID" value="BAD46989.1"/>
    <property type="molecule type" value="Genomic_DNA"/>
</dbReference>
<dbReference type="RefSeq" id="YP_097523.1">
    <property type="nucleotide sequence ID" value="NC_006347.1"/>
</dbReference>
<dbReference type="SMR" id="Q64ZT7"/>
<dbReference type="STRING" id="295405.BF0240"/>
<dbReference type="KEGG" id="bfr:BF0240"/>
<dbReference type="PATRIC" id="fig|295405.11.peg.270"/>
<dbReference type="HOGENOM" id="CLU_053680_1_0_10"/>
<dbReference type="OrthoDB" id="9803155at2"/>
<dbReference type="UniPathway" id="UPA00068">
    <property type="reaction ID" value="UER00107"/>
</dbReference>
<dbReference type="Proteomes" id="UP000002197">
    <property type="component" value="Chromosome"/>
</dbReference>
<dbReference type="GO" id="GO:0005737">
    <property type="term" value="C:cytoplasm"/>
    <property type="evidence" value="ECO:0007669"/>
    <property type="project" value="UniProtKB-SubCell"/>
</dbReference>
<dbReference type="GO" id="GO:0003991">
    <property type="term" value="F:acetylglutamate kinase activity"/>
    <property type="evidence" value="ECO:0007669"/>
    <property type="project" value="UniProtKB-UniRule"/>
</dbReference>
<dbReference type="GO" id="GO:0005524">
    <property type="term" value="F:ATP binding"/>
    <property type="evidence" value="ECO:0007669"/>
    <property type="project" value="UniProtKB-UniRule"/>
</dbReference>
<dbReference type="GO" id="GO:0042450">
    <property type="term" value="P:arginine biosynthetic process via ornithine"/>
    <property type="evidence" value="ECO:0007669"/>
    <property type="project" value="UniProtKB-UniRule"/>
</dbReference>
<dbReference type="GO" id="GO:0006526">
    <property type="term" value="P:L-arginine biosynthetic process"/>
    <property type="evidence" value="ECO:0007669"/>
    <property type="project" value="UniProtKB-UniPathway"/>
</dbReference>
<dbReference type="CDD" id="cd04238">
    <property type="entry name" value="AAK_NAGK-like"/>
    <property type="match status" value="1"/>
</dbReference>
<dbReference type="Gene3D" id="3.40.1160.10">
    <property type="entry name" value="Acetylglutamate kinase-like"/>
    <property type="match status" value="1"/>
</dbReference>
<dbReference type="HAMAP" id="MF_00082">
    <property type="entry name" value="ArgB"/>
    <property type="match status" value="1"/>
</dbReference>
<dbReference type="InterPro" id="IPR036393">
    <property type="entry name" value="AceGlu_kinase-like_sf"/>
</dbReference>
<dbReference type="InterPro" id="IPR004662">
    <property type="entry name" value="AcgluKinase_fam"/>
</dbReference>
<dbReference type="InterPro" id="IPR037528">
    <property type="entry name" value="ArgB"/>
</dbReference>
<dbReference type="InterPro" id="IPR001048">
    <property type="entry name" value="Asp/Glu/Uridylate_kinase"/>
</dbReference>
<dbReference type="NCBIfam" id="TIGR00761">
    <property type="entry name" value="argB"/>
    <property type="match status" value="1"/>
</dbReference>
<dbReference type="PANTHER" id="PTHR23342">
    <property type="entry name" value="N-ACETYLGLUTAMATE SYNTHASE"/>
    <property type="match status" value="1"/>
</dbReference>
<dbReference type="PANTHER" id="PTHR23342:SF0">
    <property type="entry name" value="N-ACETYLGLUTAMATE SYNTHASE, MITOCHONDRIAL"/>
    <property type="match status" value="1"/>
</dbReference>
<dbReference type="Pfam" id="PF00696">
    <property type="entry name" value="AA_kinase"/>
    <property type="match status" value="1"/>
</dbReference>
<dbReference type="PIRSF" id="PIRSF000728">
    <property type="entry name" value="NAGK"/>
    <property type="match status" value="1"/>
</dbReference>
<dbReference type="SUPFAM" id="SSF53633">
    <property type="entry name" value="Carbamate kinase-like"/>
    <property type="match status" value="1"/>
</dbReference>
<evidence type="ECO:0000255" key="1">
    <source>
        <dbReference type="HAMAP-Rule" id="MF_00082"/>
    </source>
</evidence>
<keyword id="KW-0028">Amino-acid biosynthesis</keyword>
<keyword id="KW-0055">Arginine biosynthesis</keyword>
<keyword id="KW-0067">ATP-binding</keyword>
<keyword id="KW-0963">Cytoplasm</keyword>
<keyword id="KW-0418">Kinase</keyword>
<keyword id="KW-0547">Nucleotide-binding</keyword>
<keyword id="KW-0808">Transferase</keyword>